<protein>
    <recommendedName>
        <fullName>Dihydrolipoyllysine-residue acetyltransferase component of pyruvate dehydrogenase complex</fullName>
        <ecNumber>2.3.1.12</ecNumber>
    </recommendedName>
    <alternativeName>
        <fullName>Dihydrolipoamide acetyltransferase component of pyruvate dehydrogenase complex</fullName>
    </alternativeName>
    <alternativeName>
        <fullName>E2</fullName>
    </alternativeName>
</protein>
<sequence length="430" mass="46368">MAFEFRLPDIGEGIHEGEIVKWFVKAGDTIEEDDVLAEVQNDKSVVEIPSPVSGTVEEVMVEEGTVAVVGDVIVKIDAPDAEDMQFKGHDDDSSSKEEPAKEEAPAEQAPVATQTEEVDENRTVKAMPSVRKYAREKGVNIKAVSGSGKNGRITKEDVDAYLNGGAPTASNESAASATSEEVAETPAAPAAVSLEGDFPETTEKIPAMRRAIAKAMVNSKHTAPHVTLMDEIDVQALWDHRKKFKEIAAEQGTKLTFLPYVVKALVSALKKYPALNTSFNEEAGEIVHKHYWNIGIAADTDRGLLVPVVKHADRKSIFQISDEINELAVKARDGKLTADEMKGATCTISNIGSAGGQWFTPVINHPEVAILGIGRIAQKPIVKDGEIVAAPVLALSLSFDHRQIDGATGQNAMNHIKRLLNNPELLLMEG</sequence>
<keyword id="KW-0012">Acyltransferase</keyword>
<keyword id="KW-0450">Lipoyl</keyword>
<keyword id="KW-0808">Transferase</keyword>
<gene>
    <name type="primary">pdhC</name>
    <name type="ordered locus">SAV1095</name>
</gene>
<evidence type="ECO:0000250" key="1"/>
<evidence type="ECO:0000255" key="2"/>
<evidence type="ECO:0000255" key="3">
    <source>
        <dbReference type="PROSITE-ProRule" id="PRU01066"/>
    </source>
</evidence>
<evidence type="ECO:0000255" key="4">
    <source>
        <dbReference type="PROSITE-ProRule" id="PRU01170"/>
    </source>
</evidence>
<evidence type="ECO:0000256" key="5">
    <source>
        <dbReference type="SAM" id="MobiDB-lite"/>
    </source>
</evidence>
<evidence type="ECO:0000305" key="6"/>
<reference key="1">
    <citation type="journal article" date="2001" name="Lancet">
        <title>Whole genome sequencing of meticillin-resistant Staphylococcus aureus.</title>
        <authorList>
            <person name="Kuroda M."/>
            <person name="Ohta T."/>
            <person name="Uchiyama I."/>
            <person name="Baba T."/>
            <person name="Yuzawa H."/>
            <person name="Kobayashi I."/>
            <person name="Cui L."/>
            <person name="Oguchi A."/>
            <person name="Aoki K."/>
            <person name="Nagai Y."/>
            <person name="Lian J.-Q."/>
            <person name="Ito T."/>
            <person name="Kanamori M."/>
            <person name="Matsumaru H."/>
            <person name="Maruyama A."/>
            <person name="Murakami H."/>
            <person name="Hosoyama A."/>
            <person name="Mizutani-Ui Y."/>
            <person name="Takahashi N.K."/>
            <person name="Sawano T."/>
            <person name="Inoue R."/>
            <person name="Kaito C."/>
            <person name="Sekimizu K."/>
            <person name="Hirakawa H."/>
            <person name="Kuhara S."/>
            <person name="Goto S."/>
            <person name="Yabuzaki J."/>
            <person name="Kanehisa M."/>
            <person name="Yamashita A."/>
            <person name="Oshima K."/>
            <person name="Furuya K."/>
            <person name="Yoshino C."/>
            <person name="Shiba T."/>
            <person name="Hattori M."/>
            <person name="Ogasawara N."/>
            <person name="Hayashi H."/>
            <person name="Hiramatsu K."/>
        </authorList>
    </citation>
    <scope>NUCLEOTIDE SEQUENCE [LARGE SCALE GENOMIC DNA]</scope>
    <source>
        <strain>Mu50 / ATCC 700699</strain>
    </source>
</reference>
<accession>P65635</accession>
<accession>Q99V06</accession>
<dbReference type="EC" id="2.3.1.12"/>
<dbReference type="EMBL" id="BA000017">
    <property type="protein sequence ID" value="BAB57257.1"/>
    <property type="molecule type" value="Genomic_DNA"/>
</dbReference>
<dbReference type="RefSeq" id="WP_000863439.1">
    <property type="nucleotide sequence ID" value="NC_002758.2"/>
</dbReference>
<dbReference type="SMR" id="P65635"/>
<dbReference type="KEGG" id="sav:SAV1095"/>
<dbReference type="HOGENOM" id="CLU_016733_10_0_9"/>
<dbReference type="PhylomeDB" id="P65635"/>
<dbReference type="Proteomes" id="UP000002481">
    <property type="component" value="Chromosome"/>
</dbReference>
<dbReference type="GO" id="GO:0005737">
    <property type="term" value="C:cytoplasm"/>
    <property type="evidence" value="ECO:0007669"/>
    <property type="project" value="TreeGrafter"/>
</dbReference>
<dbReference type="GO" id="GO:0004742">
    <property type="term" value="F:dihydrolipoyllysine-residue acetyltransferase activity"/>
    <property type="evidence" value="ECO:0007669"/>
    <property type="project" value="UniProtKB-EC"/>
</dbReference>
<dbReference type="GO" id="GO:0031405">
    <property type="term" value="F:lipoic acid binding"/>
    <property type="evidence" value="ECO:0007669"/>
    <property type="project" value="TreeGrafter"/>
</dbReference>
<dbReference type="CDD" id="cd06849">
    <property type="entry name" value="lipoyl_domain"/>
    <property type="match status" value="1"/>
</dbReference>
<dbReference type="FunFam" id="3.30.559.10:FF:000007">
    <property type="entry name" value="Dihydrolipoamide acetyltransferase component of pyruvate dehydrogenase complex"/>
    <property type="match status" value="1"/>
</dbReference>
<dbReference type="FunFam" id="4.10.320.10:FF:000011">
    <property type="entry name" value="Dihydrolipoamide acetyltransferase component of pyruvate dehydrogenase complex"/>
    <property type="match status" value="1"/>
</dbReference>
<dbReference type="Gene3D" id="2.40.50.100">
    <property type="match status" value="1"/>
</dbReference>
<dbReference type="Gene3D" id="3.30.559.10">
    <property type="entry name" value="Chloramphenicol acetyltransferase-like domain"/>
    <property type="match status" value="1"/>
</dbReference>
<dbReference type="Gene3D" id="4.10.320.10">
    <property type="entry name" value="E3-binding domain"/>
    <property type="match status" value="1"/>
</dbReference>
<dbReference type="InterPro" id="IPR003016">
    <property type="entry name" value="2-oxoA_DH_lipoyl-BS"/>
</dbReference>
<dbReference type="InterPro" id="IPR001078">
    <property type="entry name" value="2-oxoacid_DH_actylTfrase"/>
</dbReference>
<dbReference type="InterPro" id="IPR050743">
    <property type="entry name" value="2-oxoacid_DH_E2_comp"/>
</dbReference>
<dbReference type="InterPro" id="IPR000089">
    <property type="entry name" value="Biotin_lipoyl"/>
</dbReference>
<dbReference type="InterPro" id="IPR023213">
    <property type="entry name" value="CAT-like_dom_sf"/>
</dbReference>
<dbReference type="InterPro" id="IPR036625">
    <property type="entry name" value="E3-bd_dom_sf"/>
</dbReference>
<dbReference type="InterPro" id="IPR004167">
    <property type="entry name" value="PSBD"/>
</dbReference>
<dbReference type="InterPro" id="IPR011053">
    <property type="entry name" value="Single_hybrid_motif"/>
</dbReference>
<dbReference type="PANTHER" id="PTHR43178">
    <property type="entry name" value="DIHYDROLIPOAMIDE ACETYLTRANSFERASE COMPONENT OF PYRUVATE DEHYDROGENASE COMPLEX"/>
    <property type="match status" value="1"/>
</dbReference>
<dbReference type="PANTHER" id="PTHR43178:SF5">
    <property type="entry name" value="LIPOAMIDE ACYLTRANSFERASE COMPONENT OF BRANCHED-CHAIN ALPHA-KETO ACID DEHYDROGENASE COMPLEX, MITOCHONDRIAL"/>
    <property type="match status" value="1"/>
</dbReference>
<dbReference type="Pfam" id="PF00198">
    <property type="entry name" value="2-oxoacid_dh"/>
    <property type="match status" value="1"/>
</dbReference>
<dbReference type="Pfam" id="PF00364">
    <property type="entry name" value="Biotin_lipoyl"/>
    <property type="match status" value="1"/>
</dbReference>
<dbReference type="Pfam" id="PF02817">
    <property type="entry name" value="E3_binding"/>
    <property type="match status" value="1"/>
</dbReference>
<dbReference type="SUPFAM" id="SSF52777">
    <property type="entry name" value="CoA-dependent acyltransferases"/>
    <property type="match status" value="1"/>
</dbReference>
<dbReference type="SUPFAM" id="SSF47005">
    <property type="entry name" value="Peripheral subunit-binding domain of 2-oxo acid dehydrogenase complex"/>
    <property type="match status" value="1"/>
</dbReference>
<dbReference type="SUPFAM" id="SSF51230">
    <property type="entry name" value="Single hybrid motif"/>
    <property type="match status" value="1"/>
</dbReference>
<dbReference type="PROSITE" id="PS50968">
    <property type="entry name" value="BIOTINYL_LIPOYL"/>
    <property type="match status" value="1"/>
</dbReference>
<dbReference type="PROSITE" id="PS00189">
    <property type="entry name" value="LIPOYL"/>
    <property type="match status" value="1"/>
</dbReference>
<dbReference type="PROSITE" id="PS51826">
    <property type="entry name" value="PSBD"/>
    <property type="match status" value="1"/>
</dbReference>
<comment type="function">
    <text>The pyruvate dehydrogenase complex catalyzes the overall conversion of pyruvate to acetyl-CoA and CO(2). It contains multiple copies of three enzymatic components: pyruvate dehydrogenase (E1), dihydrolipoamide acetyltransferase (E2) and lipoamide dehydrogenase (E3).</text>
</comment>
<comment type="catalytic activity">
    <reaction>
        <text>N(6)-[(R)-dihydrolipoyl]-L-lysyl-[protein] + acetyl-CoA = N(6)-[(R)-S(8)-acetyldihydrolipoyl]-L-lysyl-[protein] + CoA</text>
        <dbReference type="Rhea" id="RHEA:17017"/>
        <dbReference type="Rhea" id="RHEA-COMP:10475"/>
        <dbReference type="Rhea" id="RHEA-COMP:10478"/>
        <dbReference type="ChEBI" id="CHEBI:57287"/>
        <dbReference type="ChEBI" id="CHEBI:57288"/>
        <dbReference type="ChEBI" id="CHEBI:83100"/>
        <dbReference type="ChEBI" id="CHEBI:83111"/>
        <dbReference type="EC" id="2.3.1.12"/>
    </reaction>
</comment>
<comment type="cofactor">
    <cofactor evidence="1">
        <name>(R)-lipoate</name>
        <dbReference type="ChEBI" id="CHEBI:83088"/>
    </cofactor>
    <text evidence="1">Binds 1 lipoyl cofactor covalently.</text>
</comment>
<comment type="subunit">
    <text evidence="1">Forms a 24-polypeptide structural core with octahedral symmetry.</text>
</comment>
<comment type="similarity">
    <text evidence="6">Belongs to the 2-oxoacid dehydrogenase family.</text>
</comment>
<proteinExistence type="inferred from homology"/>
<feature type="chain" id="PRO_0000162288" description="Dihydrolipoyllysine-residue acetyltransferase component of pyruvate dehydrogenase complex">
    <location>
        <begin position="1"/>
        <end position="430"/>
    </location>
</feature>
<feature type="domain" description="Lipoyl-binding" evidence="3">
    <location>
        <begin position="2"/>
        <end position="77"/>
    </location>
</feature>
<feature type="domain" description="Peripheral subunit-binding (PSBD)" evidence="4">
    <location>
        <begin position="125"/>
        <end position="162"/>
    </location>
</feature>
<feature type="region of interest" description="Disordered" evidence="5">
    <location>
        <begin position="80"/>
        <end position="122"/>
    </location>
</feature>
<feature type="region of interest" description="Disordered" evidence="5">
    <location>
        <begin position="164"/>
        <end position="199"/>
    </location>
</feature>
<feature type="compositionally biased region" description="Basic and acidic residues" evidence="5">
    <location>
        <begin position="84"/>
        <end position="104"/>
    </location>
</feature>
<feature type="compositionally biased region" description="Low complexity" evidence="5">
    <location>
        <begin position="166"/>
        <end position="193"/>
    </location>
</feature>
<feature type="active site" evidence="2">
    <location>
        <position position="401"/>
    </location>
</feature>
<feature type="modified residue" description="N6-lipoyllysine" evidence="1 3">
    <location>
        <position position="43"/>
    </location>
</feature>
<name>ODP2_STAAM</name>
<organism>
    <name type="scientific">Staphylococcus aureus (strain Mu50 / ATCC 700699)</name>
    <dbReference type="NCBI Taxonomy" id="158878"/>
    <lineage>
        <taxon>Bacteria</taxon>
        <taxon>Bacillati</taxon>
        <taxon>Bacillota</taxon>
        <taxon>Bacilli</taxon>
        <taxon>Bacillales</taxon>
        <taxon>Staphylococcaceae</taxon>
        <taxon>Staphylococcus</taxon>
    </lineage>
</organism>